<gene>
    <name evidence="1" type="primary">sucC</name>
    <name type="ordered locus">Bmul_0653</name>
    <name type="ordered locus">BMULJ_02606</name>
</gene>
<dbReference type="EC" id="6.2.1.5" evidence="1"/>
<dbReference type="EMBL" id="CP000868">
    <property type="protein sequence ID" value="ABX14348.1"/>
    <property type="molecule type" value="Genomic_DNA"/>
</dbReference>
<dbReference type="EMBL" id="AP009385">
    <property type="protein sequence ID" value="BAG44497.1"/>
    <property type="molecule type" value="Genomic_DNA"/>
</dbReference>
<dbReference type="RefSeq" id="WP_012212783.1">
    <property type="nucleotide sequence ID" value="NC_010084.1"/>
</dbReference>
<dbReference type="SMR" id="A9AFT3"/>
<dbReference type="STRING" id="395019.BMULJ_02606"/>
<dbReference type="KEGG" id="bmj:BMULJ_02606"/>
<dbReference type="KEGG" id="bmu:Bmul_0653"/>
<dbReference type="eggNOG" id="COG0045">
    <property type="taxonomic scope" value="Bacteria"/>
</dbReference>
<dbReference type="HOGENOM" id="CLU_037430_0_2_4"/>
<dbReference type="UniPathway" id="UPA00223">
    <property type="reaction ID" value="UER00999"/>
</dbReference>
<dbReference type="Proteomes" id="UP000008815">
    <property type="component" value="Chromosome 1"/>
</dbReference>
<dbReference type="GO" id="GO:0005829">
    <property type="term" value="C:cytosol"/>
    <property type="evidence" value="ECO:0007669"/>
    <property type="project" value="TreeGrafter"/>
</dbReference>
<dbReference type="GO" id="GO:0042709">
    <property type="term" value="C:succinate-CoA ligase complex"/>
    <property type="evidence" value="ECO:0007669"/>
    <property type="project" value="TreeGrafter"/>
</dbReference>
<dbReference type="GO" id="GO:0005524">
    <property type="term" value="F:ATP binding"/>
    <property type="evidence" value="ECO:0007669"/>
    <property type="project" value="UniProtKB-UniRule"/>
</dbReference>
<dbReference type="GO" id="GO:0000287">
    <property type="term" value="F:magnesium ion binding"/>
    <property type="evidence" value="ECO:0007669"/>
    <property type="project" value="UniProtKB-UniRule"/>
</dbReference>
<dbReference type="GO" id="GO:0004775">
    <property type="term" value="F:succinate-CoA ligase (ADP-forming) activity"/>
    <property type="evidence" value="ECO:0007669"/>
    <property type="project" value="UniProtKB-UniRule"/>
</dbReference>
<dbReference type="GO" id="GO:0004776">
    <property type="term" value="F:succinate-CoA ligase (GDP-forming) activity"/>
    <property type="evidence" value="ECO:0007669"/>
    <property type="project" value="RHEA"/>
</dbReference>
<dbReference type="GO" id="GO:0006104">
    <property type="term" value="P:succinyl-CoA metabolic process"/>
    <property type="evidence" value="ECO:0007669"/>
    <property type="project" value="TreeGrafter"/>
</dbReference>
<dbReference type="GO" id="GO:0006099">
    <property type="term" value="P:tricarboxylic acid cycle"/>
    <property type="evidence" value="ECO:0007669"/>
    <property type="project" value="UniProtKB-UniRule"/>
</dbReference>
<dbReference type="FunFam" id="3.30.1490.20:FF:000002">
    <property type="entry name" value="Succinate--CoA ligase [ADP-forming] subunit beta"/>
    <property type="match status" value="1"/>
</dbReference>
<dbReference type="FunFam" id="3.30.470.20:FF:000002">
    <property type="entry name" value="Succinate--CoA ligase [ADP-forming] subunit beta"/>
    <property type="match status" value="1"/>
</dbReference>
<dbReference type="FunFam" id="3.40.50.261:FF:000001">
    <property type="entry name" value="Succinate--CoA ligase [ADP-forming] subunit beta"/>
    <property type="match status" value="1"/>
</dbReference>
<dbReference type="Gene3D" id="3.30.1490.20">
    <property type="entry name" value="ATP-grasp fold, A domain"/>
    <property type="match status" value="1"/>
</dbReference>
<dbReference type="Gene3D" id="3.30.470.20">
    <property type="entry name" value="ATP-grasp fold, B domain"/>
    <property type="match status" value="1"/>
</dbReference>
<dbReference type="Gene3D" id="3.40.50.261">
    <property type="entry name" value="Succinyl-CoA synthetase domains"/>
    <property type="match status" value="1"/>
</dbReference>
<dbReference type="HAMAP" id="MF_00558">
    <property type="entry name" value="Succ_CoA_beta"/>
    <property type="match status" value="1"/>
</dbReference>
<dbReference type="InterPro" id="IPR011761">
    <property type="entry name" value="ATP-grasp"/>
</dbReference>
<dbReference type="InterPro" id="IPR013650">
    <property type="entry name" value="ATP-grasp_succ-CoA_synth-type"/>
</dbReference>
<dbReference type="InterPro" id="IPR013815">
    <property type="entry name" value="ATP_grasp_subdomain_1"/>
</dbReference>
<dbReference type="InterPro" id="IPR017866">
    <property type="entry name" value="Succ-CoA_synthase_bsu_CS"/>
</dbReference>
<dbReference type="InterPro" id="IPR005811">
    <property type="entry name" value="SUCC_ACL_C"/>
</dbReference>
<dbReference type="InterPro" id="IPR005809">
    <property type="entry name" value="Succ_CoA_ligase-like_bsu"/>
</dbReference>
<dbReference type="InterPro" id="IPR016102">
    <property type="entry name" value="Succinyl-CoA_synth-like"/>
</dbReference>
<dbReference type="NCBIfam" id="NF001913">
    <property type="entry name" value="PRK00696.1"/>
    <property type="match status" value="1"/>
</dbReference>
<dbReference type="NCBIfam" id="TIGR01016">
    <property type="entry name" value="sucCoAbeta"/>
    <property type="match status" value="1"/>
</dbReference>
<dbReference type="PANTHER" id="PTHR11815:SF10">
    <property type="entry name" value="SUCCINATE--COA LIGASE [GDP-FORMING] SUBUNIT BETA, MITOCHONDRIAL"/>
    <property type="match status" value="1"/>
</dbReference>
<dbReference type="PANTHER" id="PTHR11815">
    <property type="entry name" value="SUCCINYL-COA SYNTHETASE BETA CHAIN"/>
    <property type="match status" value="1"/>
</dbReference>
<dbReference type="Pfam" id="PF08442">
    <property type="entry name" value="ATP-grasp_2"/>
    <property type="match status" value="1"/>
</dbReference>
<dbReference type="Pfam" id="PF00549">
    <property type="entry name" value="Ligase_CoA"/>
    <property type="match status" value="1"/>
</dbReference>
<dbReference type="PIRSF" id="PIRSF001554">
    <property type="entry name" value="SucCS_beta"/>
    <property type="match status" value="1"/>
</dbReference>
<dbReference type="SUPFAM" id="SSF56059">
    <property type="entry name" value="Glutathione synthetase ATP-binding domain-like"/>
    <property type="match status" value="1"/>
</dbReference>
<dbReference type="SUPFAM" id="SSF52210">
    <property type="entry name" value="Succinyl-CoA synthetase domains"/>
    <property type="match status" value="1"/>
</dbReference>
<dbReference type="PROSITE" id="PS50975">
    <property type="entry name" value="ATP_GRASP"/>
    <property type="match status" value="1"/>
</dbReference>
<dbReference type="PROSITE" id="PS01217">
    <property type="entry name" value="SUCCINYL_COA_LIG_3"/>
    <property type="match status" value="1"/>
</dbReference>
<sequence>MKIHEYQGKEILRKFGVAVPRGKPAFSVDEAVKVAEELGGPVWVVKAQIHAGGRGKGGGVKVAKSLEQVREYANQILGMQLVTHQTGPEGQKVNRLLIEEGADIKQELYVSLVVDRISQKIVLMGSSEGGMDIEEVAEKHPELIHKVIVEPSTGLLDSQADDLATKIGVPAASIPQARAILQGLYKAFWETDASLAEINPLNVSGDGKVVALDAKFNFDSNALFRHPEIVAYRDLDEEDPAEIEASKFDLAYISLDGNIGCLVNGAGLAMATMDTIKLFGGEPANFLDVGGGATTEKVTEAFKLMLKNPGLKAILVNIFGGIMRCDVIAEGVIAGSKAVNLNVPLVVRMKGTNEDLGKKMLADSGLPIISADSMEEAAQKVVAAAAGK</sequence>
<protein>
    <recommendedName>
        <fullName evidence="1">Succinate--CoA ligase [ADP-forming] subunit beta</fullName>
        <ecNumber evidence="1">6.2.1.5</ecNumber>
    </recommendedName>
    <alternativeName>
        <fullName evidence="1">Succinyl-CoA synthetase subunit beta</fullName>
        <shortName evidence="1">SCS-beta</shortName>
    </alternativeName>
</protein>
<keyword id="KW-0067">ATP-binding</keyword>
<keyword id="KW-0436">Ligase</keyword>
<keyword id="KW-0460">Magnesium</keyword>
<keyword id="KW-0479">Metal-binding</keyword>
<keyword id="KW-0547">Nucleotide-binding</keyword>
<keyword id="KW-1185">Reference proteome</keyword>
<keyword id="KW-0816">Tricarboxylic acid cycle</keyword>
<reference key="1">
    <citation type="submission" date="2007-10" db="EMBL/GenBank/DDBJ databases">
        <title>Complete sequence of chromosome 1 of Burkholderia multivorans ATCC 17616.</title>
        <authorList>
            <person name="Copeland A."/>
            <person name="Lucas S."/>
            <person name="Lapidus A."/>
            <person name="Barry K."/>
            <person name="Glavina del Rio T."/>
            <person name="Dalin E."/>
            <person name="Tice H."/>
            <person name="Pitluck S."/>
            <person name="Chain P."/>
            <person name="Malfatti S."/>
            <person name="Shin M."/>
            <person name="Vergez L."/>
            <person name="Schmutz J."/>
            <person name="Larimer F."/>
            <person name="Land M."/>
            <person name="Hauser L."/>
            <person name="Kyrpides N."/>
            <person name="Kim E."/>
            <person name="Tiedje J."/>
            <person name="Richardson P."/>
        </authorList>
    </citation>
    <scope>NUCLEOTIDE SEQUENCE [LARGE SCALE GENOMIC DNA]</scope>
    <source>
        <strain>ATCC 17616 / 249</strain>
    </source>
</reference>
<reference key="2">
    <citation type="submission" date="2007-04" db="EMBL/GenBank/DDBJ databases">
        <title>Complete genome sequence of Burkholderia multivorans ATCC 17616.</title>
        <authorList>
            <person name="Ohtsubo Y."/>
            <person name="Yamashita A."/>
            <person name="Kurokawa K."/>
            <person name="Takami H."/>
            <person name="Yuhara S."/>
            <person name="Nishiyama E."/>
            <person name="Endo R."/>
            <person name="Miyazaki R."/>
            <person name="Ono A."/>
            <person name="Yano K."/>
            <person name="Ito M."/>
            <person name="Sota M."/>
            <person name="Yuji N."/>
            <person name="Hattori M."/>
            <person name="Tsuda M."/>
        </authorList>
    </citation>
    <scope>NUCLEOTIDE SEQUENCE [LARGE SCALE GENOMIC DNA]</scope>
    <source>
        <strain>ATCC 17616 / 249</strain>
    </source>
</reference>
<evidence type="ECO:0000255" key="1">
    <source>
        <dbReference type="HAMAP-Rule" id="MF_00558"/>
    </source>
</evidence>
<name>SUCC_BURM1</name>
<organism>
    <name type="scientific">Burkholderia multivorans (strain ATCC 17616 / 249)</name>
    <dbReference type="NCBI Taxonomy" id="395019"/>
    <lineage>
        <taxon>Bacteria</taxon>
        <taxon>Pseudomonadati</taxon>
        <taxon>Pseudomonadota</taxon>
        <taxon>Betaproteobacteria</taxon>
        <taxon>Burkholderiales</taxon>
        <taxon>Burkholderiaceae</taxon>
        <taxon>Burkholderia</taxon>
        <taxon>Burkholderia cepacia complex</taxon>
    </lineage>
</organism>
<accession>A9AFT3</accession>
<comment type="function">
    <text evidence="1">Succinyl-CoA synthetase functions in the citric acid cycle (TCA), coupling the hydrolysis of succinyl-CoA to the synthesis of either ATP or GTP and thus represents the only step of substrate-level phosphorylation in the TCA. The beta subunit provides nucleotide specificity of the enzyme and binds the substrate succinate, while the binding sites for coenzyme A and phosphate are found in the alpha subunit.</text>
</comment>
<comment type="catalytic activity">
    <reaction evidence="1">
        <text>succinate + ATP + CoA = succinyl-CoA + ADP + phosphate</text>
        <dbReference type="Rhea" id="RHEA:17661"/>
        <dbReference type="ChEBI" id="CHEBI:30031"/>
        <dbReference type="ChEBI" id="CHEBI:30616"/>
        <dbReference type="ChEBI" id="CHEBI:43474"/>
        <dbReference type="ChEBI" id="CHEBI:57287"/>
        <dbReference type="ChEBI" id="CHEBI:57292"/>
        <dbReference type="ChEBI" id="CHEBI:456216"/>
        <dbReference type="EC" id="6.2.1.5"/>
    </reaction>
    <physiologicalReaction direction="right-to-left" evidence="1">
        <dbReference type="Rhea" id="RHEA:17663"/>
    </physiologicalReaction>
</comment>
<comment type="catalytic activity">
    <reaction evidence="1">
        <text>GTP + succinate + CoA = succinyl-CoA + GDP + phosphate</text>
        <dbReference type="Rhea" id="RHEA:22120"/>
        <dbReference type="ChEBI" id="CHEBI:30031"/>
        <dbReference type="ChEBI" id="CHEBI:37565"/>
        <dbReference type="ChEBI" id="CHEBI:43474"/>
        <dbReference type="ChEBI" id="CHEBI:57287"/>
        <dbReference type="ChEBI" id="CHEBI:57292"/>
        <dbReference type="ChEBI" id="CHEBI:58189"/>
    </reaction>
    <physiologicalReaction direction="right-to-left" evidence="1">
        <dbReference type="Rhea" id="RHEA:22122"/>
    </physiologicalReaction>
</comment>
<comment type="cofactor">
    <cofactor evidence="1">
        <name>Mg(2+)</name>
        <dbReference type="ChEBI" id="CHEBI:18420"/>
    </cofactor>
    <text evidence="1">Binds 1 Mg(2+) ion per subunit.</text>
</comment>
<comment type="pathway">
    <text evidence="1">Carbohydrate metabolism; tricarboxylic acid cycle; succinate from succinyl-CoA (ligase route): step 1/1.</text>
</comment>
<comment type="subunit">
    <text evidence="1">Heterotetramer of two alpha and two beta subunits.</text>
</comment>
<comment type="similarity">
    <text evidence="1">Belongs to the succinate/malate CoA ligase beta subunit family.</text>
</comment>
<feature type="chain" id="PRO_1000129168" description="Succinate--CoA ligase [ADP-forming] subunit beta">
    <location>
        <begin position="1"/>
        <end position="388"/>
    </location>
</feature>
<feature type="domain" description="ATP-grasp" evidence="1">
    <location>
        <begin position="9"/>
        <end position="244"/>
    </location>
</feature>
<feature type="binding site" evidence="1">
    <location>
        <position position="46"/>
    </location>
    <ligand>
        <name>ATP</name>
        <dbReference type="ChEBI" id="CHEBI:30616"/>
    </ligand>
</feature>
<feature type="binding site" evidence="1">
    <location>
        <begin position="53"/>
        <end position="55"/>
    </location>
    <ligand>
        <name>ATP</name>
        <dbReference type="ChEBI" id="CHEBI:30616"/>
    </ligand>
</feature>
<feature type="binding site" evidence="1">
    <location>
        <position position="99"/>
    </location>
    <ligand>
        <name>ATP</name>
        <dbReference type="ChEBI" id="CHEBI:30616"/>
    </ligand>
</feature>
<feature type="binding site" evidence="1">
    <location>
        <position position="102"/>
    </location>
    <ligand>
        <name>ATP</name>
        <dbReference type="ChEBI" id="CHEBI:30616"/>
    </ligand>
</feature>
<feature type="binding site" evidence="1">
    <location>
        <position position="107"/>
    </location>
    <ligand>
        <name>ATP</name>
        <dbReference type="ChEBI" id="CHEBI:30616"/>
    </ligand>
</feature>
<feature type="binding site" evidence="1">
    <location>
        <position position="199"/>
    </location>
    <ligand>
        <name>Mg(2+)</name>
        <dbReference type="ChEBI" id="CHEBI:18420"/>
    </ligand>
</feature>
<feature type="binding site" evidence="1">
    <location>
        <position position="213"/>
    </location>
    <ligand>
        <name>Mg(2+)</name>
        <dbReference type="ChEBI" id="CHEBI:18420"/>
    </ligand>
</feature>
<feature type="binding site" evidence="1">
    <location>
        <position position="264"/>
    </location>
    <ligand>
        <name>substrate</name>
        <note>ligand shared with subunit alpha</note>
    </ligand>
</feature>
<feature type="binding site" evidence="1">
    <location>
        <begin position="321"/>
        <end position="323"/>
    </location>
    <ligand>
        <name>substrate</name>
        <note>ligand shared with subunit alpha</note>
    </ligand>
</feature>
<proteinExistence type="inferred from homology"/>